<gene>
    <name evidence="1" type="primary">rplK</name>
    <name type="synonym">relC</name>
    <name type="ordered locus">YPTB0279</name>
</gene>
<proteinExistence type="inferred from homology"/>
<evidence type="ECO:0000255" key="1">
    <source>
        <dbReference type="HAMAP-Rule" id="MF_00736"/>
    </source>
</evidence>
<evidence type="ECO:0000305" key="2"/>
<sequence>MAKKVQAYVKLQVAAGMANPSPPVGPALGQQGVNIMEFCKAFNAKTESIEKGLPIPVVITVYSDRSFTFVTKTPPAAVLLKKAAGIKSGSGVPNKDKVGKVTSAQVREIAETKAADMTGSDVDAMMRSIEGTAHSMGLVVEG</sequence>
<protein>
    <recommendedName>
        <fullName evidence="1">Large ribosomal subunit protein uL11</fullName>
    </recommendedName>
    <alternativeName>
        <fullName evidence="2">50S ribosomal protein L11</fullName>
    </alternativeName>
</protein>
<accession>Q66FQ6</accession>
<dbReference type="EMBL" id="BX936398">
    <property type="protein sequence ID" value="CAH19519.1"/>
    <property type="molecule type" value="Genomic_DNA"/>
</dbReference>
<dbReference type="RefSeq" id="WP_002210672.1">
    <property type="nucleotide sequence ID" value="NZ_CP009712.1"/>
</dbReference>
<dbReference type="SMR" id="Q66FQ6"/>
<dbReference type="GeneID" id="96663772"/>
<dbReference type="KEGG" id="ypo:BZ17_2295"/>
<dbReference type="KEGG" id="yps:YPTB0279"/>
<dbReference type="PATRIC" id="fig|273123.14.peg.2427"/>
<dbReference type="Proteomes" id="UP000001011">
    <property type="component" value="Chromosome"/>
</dbReference>
<dbReference type="GO" id="GO:0022625">
    <property type="term" value="C:cytosolic large ribosomal subunit"/>
    <property type="evidence" value="ECO:0007669"/>
    <property type="project" value="TreeGrafter"/>
</dbReference>
<dbReference type="GO" id="GO:0070180">
    <property type="term" value="F:large ribosomal subunit rRNA binding"/>
    <property type="evidence" value="ECO:0007669"/>
    <property type="project" value="UniProtKB-UniRule"/>
</dbReference>
<dbReference type="GO" id="GO:0003735">
    <property type="term" value="F:structural constituent of ribosome"/>
    <property type="evidence" value="ECO:0007669"/>
    <property type="project" value="InterPro"/>
</dbReference>
<dbReference type="GO" id="GO:0006412">
    <property type="term" value="P:translation"/>
    <property type="evidence" value="ECO:0007669"/>
    <property type="project" value="UniProtKB-UniRule"/>
</dbReference>
<dbReference type="CDD" id="cd00349">
    <property type="entry name" value="Ribosomal_L11"/>
    <property type="match status" value="1"/>
</dbReference>
<dbReference type="FunFam" id="1.10.10.250:FF:000001">
    <property type="entry name" value="50S ribosomal protein L11"/>
    <property type="match status" value="1"/>
</dbReference>
<dbReference type="FunFam" id="3.30.1550.10:FF:000001">
    <property type="entry name" value="50S ribosomal protein L11"/>
    <property type="match status" value="1"/>
</dbReference>
<dbReference type="Gene3D" id="1.10.10.250">
    <property type="entry name" value="Ribosomal protein L11, C-terminal domain"/>
    <property type="match status" value="1"/>
</dbReference>
<dbReference type="Gene3D" id="3.30.1550.10">
    <property type="entry name" value="Ribosomal protein L11/L12, N-terminal domain"/>
    <property type="match status" value="1"/>
</dbReference>
<dbReference type="HAMAP" id="MF_00736">
    <property type="entry name" value="Ribosomal_uL11"/>
    <property type="match status" value="1"/>
</dbReference>
<dbReference type="InterPro" id="IPR000911">
    <property type="entry name" value="Ribosomal_uL11"/>
</dbReference>
<dbReference type="InterPro" id="IPR006519">
    <property type="entry name" value="Ribosomal_uL11_bac-typ"/>
</dbReference>
<dbReference type="InterPro" id="IPR020783">
    <property type="entry name" value="Ribosomal_uL11_C"/>
</dbReference>
<dbReference type="InterPro" id="IPR036769">
    <property type="entry name" value="Ribosomal_uL11_C_sf"/>
</dbReference>
<dbReference type="InterPro" id="IPR020785">
    <property type="entry name" value="Ribosomal_uL11_CS"/>
</dbReference>
<dbReference type="InterPro" id="IPR020784">
    <property type="entry name" value="Ribosomal_uL11_N"/>
</dbReference>
<dbReference type="InterPro" id="IPR036796">
    <property type="entry name" value="Ribosomal_uL11_N_sf"/>
</dbReference>
<dbReference type="NCBIfam" id="TIGR01632">
    <property type="entry name" value="L11_bact"/>
    <property type="match status" value="1"/>
</dbReference>
<dbReference type="PANTHER" id="PTHR11661">
    <property type="entry name" value="60S RIBOSOMAL PROTEIN L12"/>
    <property type="match status" value="1"/>
</dbReference>
<dbReference type="PANTHER" id="PTHR11661:SF1">
    <property type="entry name" value="LARGE RIBOSOMAL SUBUNIT PROTEIN UL11M"/>
    <property type="match status" value="1"/>
</dbReference>
<dbReference type="Pfam" id="PF00298">
    <property type="entry name" value="Ribosomal_L11"/>
    <property type="match status" value="1"/>
</dbReference>
<dbReference type="Pfam" id="PF03946">
    <property type="entry name" value="Ribosomal_L11_N"/>
    <property type="match status" value="1"/>
</dbReference>
<dbReference type="SMART" id="SM00649">
    <property type="entry name" value="RL11"/>
    <property type="match status" value="1"/>
</dbReference>
<dbReference type="SUPFAM" id="SSF54747">
    <property type="entry name" value="Ribosomal L11/L12e N-terminal domain"/>
    <property type="match status" value="1"/>
</dbReference>
<dbReference type="SUPFAM" id="SSF46906">
    <property type="entry name" value="Ribosomal protein L11, C-terminal domain"/>
    <property type="match status" value="1"/>
</dbReference>
<dbReference type="PROSITE" id="PS00359">
    <property type="entry name" value="RIBOSOMAL_L11"/>
    <property type="match status" value="1"/>
</dbReference>
<feature type="chain" id="PRO_0000104419" description="Large ribosomal subunit protein uL11">
    <location>
        <begin position="1"/>
        <end position="142"/>
    </location>
</feature>
<keyword id="KW-0488">Methylation</keyword>
<keyword id="KW-0687">Ribonucleoprotein</keyword>
<keyword id="KW-0689">Ribosomal protein</keyword>
<keyword id="KW-0694">RNA-binding</keyword>
<keyword id="KW-0699">rRNA-binding</keyword>
<comment type="function">
    <text evidence="1">Forms part of the ribosomal stalk which helps the ribosome interact with GTP-bound translation factors.</text>
</comment>
<comment type="subunit">
    <text evidence="1">Part of the ribosomal stalk of the 50S ribosomal subunit. Interacts with L10 and the large rRNA to form the base of the stalk. L10 forms an elongated spine to which L12 dimers bind in a sequential fashion forming a multimeric L10(L12)X complex.</text>
</comment>
<comment type="PTM">
    <text evidence="1">One or more lysine residues are methylated.</text>
</comment>
<comment type="similarity">
    <text evidence="1">Belongs to the universal ribosomal protein uL11 family.</text>
</comment>
<reference key="1">
    <citation type="journal article" date="2004" name="Proc. Natl. Acad. Sci. U.S.A.">
        <title>Insights into the evolution of Yersinia pestis through whole-genome comparison with Yersinia pseudotuberculosis.</title>
        <authorList>
            <person name="Chain P.S.G."/>
            <person name="Carniel E."/>
            <person name="Larimer F.W."/>
            <person name="Lamerdin J."/>
            <person name="Stoutland P.O."/>
            <person name="Regala W.M."/>
            <person name="Georgescu A.M."/>
            <person name="Vergez L.M."/>
            <person name="Land M.L."/>
            <person name="Motin V.L."/>
            <person name="Brubaker R.R."/>
            <person name="Fowler J."/>
            <person name="Hinnebusch J."/>
            <person name="Marceau M."/>
            <person name="Medigue C."/>
            <person name="Simonet M."/>
            <person name="Chenal-Francisque V."/>
            <person name="Souza B."/>
            <person name="Dacheux D."/>
            <person name="Elliott J.M."/>
            <person name="Derbise A."/>
            <person name="Hauser L.J."/>
            <person name="Garcia E."/>
        </authorList>
    </citation>
    <scope>NUCLEOTIDE SEQUENCE [LARGE SCALE GENOMIC DNA]</scope>
    <source>
        <strain>IP32953</strain>
    </source>
</reference>
<organism>
    <name type="scientific">Yersinia pseudotuberculosis serotype I (strain IP32953)</name>
    <dbReference type="NCBI Taxonomy" id="273123"/>
    <lineage>
        <taxon>Bacteria</taxon>
        <taxon>Pseudomonadati</taxon>
        <taxon>Pseudomonadota</taxon>
        <taxon>Gammaproteobacteria</taxon>
        <taxon>Enterobacterales</taxon>
        <taxon>Yersiniaceae</taxon>
        <taxon>Yersinia</taxon>
    </lineage>
</organism>
<name>RL11_YERPS</name>